<keyword id="KW-0997">Cell inner membrane</keyword>
<keyword id="KW-1003">Cell membrane</keyword>
<keyword id="KW-0472">Membrane</keyword>
<keyword id="KW-0520">NAD</keyword>
<keyword id="KW-0560">Oxidoreductase</keyword>
<evidence type="ECO:0000255" key="1">
    <source>
        <dbReference type="HAMAP-Rule" id="MF_01415"/>
    </source>
</evidence>
<gene>
    <name evidence="1" type="primary">kefG</name>
    <name type="ordered locus">ECH74115_4661</name>
</gene>
<accession>B5YTQ8</accession>
<reference key="1">
    <citation type="journal article" date="2011" name="Proc. Natl. Acad. Sci. U.S.A.">
        <title>Genomic anatomy of Escherichia coli O157:H7 outbreaks.</title>
        <authorList>
            <person name="Eppinger M."/>
            <person name="Mammel M.K."/>
            <person name="Leclerc J.E."/>
            <person name="Ravel J."/>
            <person name="Cebula T.A."/>
        </authorList>
    </citation>
    <scope>NUCLEOTIDE SEQUENCE [LARGE SCALE GENOMIC DNA]</scope>
    <source>
        <strain>EC4115 / EHEC</strain>
    </source>
</reference>
<comment type="function">
    <text evidence="1">Regulatory subunit of a potassium efflux system that confers protection against electrophiles. Required for full activity of KefB.</text>
</comment>
<comment type="catalytic activity">
    <reaction evidence="1">
        <text>a quinone + NADH + H(+) = a quinol + NAD(+)</text>
        <dbReference type="Rhea" id="RHEA:46160"/>
        <dbReference type="ChEBI" id="CHEBI:15378"/>
        <dbReference type="ChEBI" id="CHEBI:24646"/>
        <dbReference type="ChEBI" id="CHEBI:57540"/>
        <dbReference type="ChEBI" id="CHEBI:57945"/>
        <dbReference type="ChEBI" id="CHEBI:132124"/>
        <dbReference type="EC" id="1.6.5.2"/>
    </reaction>
</comment>
<comment type="catalytic activity">
    <reaction evidence="1">
        <text>a quinone + NADPH + H(+) = a quinol + NADP(+)</text>
        <dbReference type="Rhea" id="RHEA:46164"/>
        <dbReference type="ChEBI" id="CHEBI:15378"/>
        <dbReference type="ChEBI" id="CHEBI:24646"/>
        <dbReference type="ChEBI" id="CHEBI:57783"/>
        <dbReference type="ChEBI" id="CHEBI:58349"/>
        <dbReference type="ChEBI" id="CHEBI:132124"/>
        <dbReference type="EC" id="1.6.5.2"/>
    </reaction>
</comment>
<comment type="subunit">
    <text evidence="1">Interacts with KefB.</text>
</comment>
<comment type="subcellular location">
    <subcellularLocation>
        <location evidence="1">Cell inner membrane</location>
        <topology evidence="1">Peripheral membrane protein</topology>
        <orientation evidence="1">Cytoplasmic side</orientation>
    </subcellularLocation>
</comment>
<comment type="similarity">
    <text evidence="1">Belongs to the NAD(P)H dehydrogenase (quinone) family. KefG subfamily.</text>
</comment>
<feature type="chain" id="PRO_1000145572" description="Glutathione-regulated potassium-efflux system ancillary protein KefG">
    <location>
        <begin position="1"/>
        <end position="184"/>
    </location>
</feature>
<protein>
    <recommendedName>
        <fullName evidence="1">Glutathione-regulated potassium-efflux system ancillary protein KefG</fullName>
    </recommendedName>
    <alternativeName>
        <fullName evidence="1">Putative quinone oxidoreductase KefG</fullName>
        <ecNumber evidence="1">1.6.5.2</ecNumber>
    </alternativeName>
</protein>
<sequence length="184" mass="20958">MMSQPAKVLLLYAHPESQDSVANRVLLKPATQLSNVTVHDLYAHYPDFFIDIPREQALLREHEVIVFQHPLYTYSCPALLKEWLDRVLSRGFASGPGGNQLAGKYWRSVITTGEPESAYRYDALNRYPMSDVLRPFELAAGMCRMHWLSPIIIYWARRQSAQELASHARAYGDWLANPLSPGGR</sequence>
<dbReference type="EC" id="1.6.5.2" evidence="1"/>
<dbReference type="EMBL" id="CP001164">
    <property type="protein sequence ID" value="ACI36202.1"/>
    <property type="molecule type" value="Genomic_DNA"/>
</dbReference>
<dbReference type="SMR" id="B5YTQ8"/>
<dbReference type="KEGG" id="ecf:ECH74115_4661"/>
<dbReference type="HOGENOM" id="CLU_058643_0_1_6"/>
<dbReference type="GO" id="GO:0005886">
    <property type="term" value="C:plasma membrane"/>
    <property type="evidence" value="ECO:0007669"/>
    <property type="project" value="UniProtKB-SubCell"/>
</dbReference>
<dbReference type="GO" id="GO:0009055">
    <property type="term" value="F:electron transfer activity"/>
    <property type="evidence" value="ECO:0007669"/>
    <property type="project" value="TreeGrafter"/>
</dbReference>
<dbReference type="GO" id="GO:0010181">
    <property type="term" value="F:FMN binding"/>
    <property type="evidence" value="ECO:0007669"/>
    <property type="project" value="TreeGrafter"/>
</dbReference>
<dbReference type="GO" id="GO:0050136">
    <property type="term" value="F:NADH:ubiquinone reductase (non-electrogenic) activity"/>
    <property type="evidence" value="ECO:0007669"/>
    <property type="project" value="RHEA"/>
</dbReference>
<dbReference type="GO" id="GO:0008753">
    <property type="term" value="F:NADPH dehydrogenase (quinone) activity"/>
    <property type="evidence" value="ECO:0007669"/>
    <property type="project" value="RHEA"/>
</dbReference>
<dbReference type="GO" id="GO:1901381">
    <property type="term" value="P:positive regulation of potassium ion transmembrane transport"/>
    <property type="evidence" value="ECO:0007669"/>
    <property type="project" value="UniProtKB-UniRule"/>
</dbReference>
<dbReference type="GO" id="GO:0006813">
    <property type="term" value="P:potassium ion transport"/>
    <property type="evidence" value="ECO:0007669"/>
    <property type="project" value="InterPro"/>
</dbReference>
<dbReference type="FunFam" id="3.40.50.360:FF:000013">
    <property type="entry name" value="Glutathione-regulated potassium-efflux system ancillary protein KefG"/>
    <property type="match status" value="1"/>
</dbReference>
<dbReference type="Gene3D" id="3.40.50.360">
    <property type="match status" value="1"/>
</dbReference>
<dbReference type="HAMAP" id="MF_01415">
    <property type="entry name" value="K_H_efflux_KefG"/>
    <property type="match status" value="1"/>
</dbReference>
<dbReference type="InterPro" id="IPR003680">
    <property type="entry name" value="Flavodoxin_fold"/>
</dbReference>
<dbReference type="InterPro" id="IPR029039">
    <property type="entry name" value="Flavoprotein-like_sf"/>
</dbReference>
<dbReference type="InterPro" id="IPR023947">
    <property type="entry name" value="K_H_efflux_KefG"/>
</dbReference>
<dbReference type="InterPro" id="IPR046980">
    <property type="entry name" value="KefG/KefF"/>
</dbReference>
<dbReference type="NCBIfam" id="NF003430">
    <property type="entry name" value="PRK04930.1"/>
    <property type="match status" value="1"/>
</dbReference>
<dbReference type="PANTHER" id="PTHR47307">
    <property type="entry name" value="GLUTATHIONE-REGULATED POTASSIUM-EFFLUX SYSTEM ANCILLARY PROTEIN KEFG"/>
    <property type="match status" value="1"/>
</dbReference>
<dbReference type="PANTHER" id="PTHR47307:SF1">
    <property type="entry name" value="GLUTATHIONE-REGULATED POTASSIUM-EFFLUX SYSTEM ANCILLARY PROTEIN KEFG"/>
    <property type="match status" value="1"/>
</dbReference>
<dbReference type="Pfam" id="PF02525">
    <property type="entry name" value="Flavodoxin_2"/>
    <property type="match status" value="1"/>
</dbReference>
<dbReference type="SUPFAM" id="SSF52218">
    <property type="entry name" value="Flavoproteins"/>
    <property type="match status" value="1"/>
</dbReference>
<organism>
    <name type="scientific">Escherichia coli O157:H7 (strain EC4115 / EHEC)</name>
    <dbReference type="NCBI Taxonomy" id="444450"/>
    <lineage>
        <taxon>Bacteria</taxon>
        <taxon>Pseudomonadati</taxon>
        <taxon>Pseudomonadota</taxon>
        <taxon>Gammaproteobacteria</taxon>
        <taxon>Enterobacterales</taxon>
        <taxon>Enterobacteriaceae</taxon>
        <taxon>Escherichia</taxon>
    </lineage>
</organism>
<name>KEFG_ECO5E</name>
<proteinExistence type="inferred from homology"/>